<feature type="chain" id="PRO_0000154881" description="Probable tRNA sulfurtransferase">
    <location>
        <begin position="1"/>
        <end position="380"/>
    </location>
</feature>
<feature type="domain" description="THUMP">
    <location>
        <begin position="58"/>
        <end position="162"/>
    </location>
</feature>
<feature type="binding site" evidence="1">
    <location>
        <begin position="178"/>
        <end position="179"/>
    </location>
    <ligand>
        <name>ATP</name>
        <dbReference type="ChEBI" id="CHEBI:30616"/>
    </ligand>
</feature>
<feature type="binding site" evidence="1">
    <location>
        <begin position="203"/>
        <end position="204"/>
    </location>
    <ligand>
        <name>ATP</name>
        <dbReference type="ChEBI" id="CHEBI:30616"/>
    </ligand>
</feature>
<feature type="binding site" evidence="1">
    <location>
        <position position="260"/>
    </location>
    <ligand>
        <name>ATP</name>
        <dbReference type="ChEBI" id="CHEBI:30616"/>
    </ligand>
</feature>
<feature type="binding site" evidence="1">
    <location>
        <position position="282"/>
    </location>
    <ligand>
        <name>ATP</name>
        <dbReference type="ChEBI" id="CHEBI:30616"/>
    </ligand>
</feature>
<feature type="binding site" evidence="1">
    <location>
        <position position="291"/>
    </location>
    <ligand>
        <name>ATP</name>
        <dbReference type="ChEBI" id="CHEBI:30616"/>
    </ligand>
</feature>
<keyword id="KW-0067">ATP-binding</keyword>
<keyword id="KW-0963">Cytoplasm</keyword>
<keyword id="KW-0547">Nucleotide-binding</keyword>
<keyword id="KW-1185">Reference proteome</keyword>
<keyword id="KW-0694">RNA-binding</keyword>
<keyword id="KW-0784">Thiamine biosynthesis</keyword>
<keyword id="KW-0808">Transferase</keyword>
<keyword id="KW-0820">tRNA-binding</keyword>
<accession>Q8R9F0</accession>
<sequence length="380" mass="42899">MKDVLLIKYGELALKGENRSFFENTLVKNIKYALRDFDGVKVEKTHGRIYVECEKDVEEAIERLKKVFGIVGITRAKEADLDLEEIFKAAVDLMKSHQGKTFKVETKRPNKAFPYNSMEVSRRVGAAVLKNVKNMKVDVHNPDVLLNVEIREKAFLYAGVIEGAGGLPLGTNGKATVLLSGGIDSPVAAWMMMKRGVEVEAVYFHSPPYTSDRAKEKVVDLCKVLSQYGRGMRLHVVHFTDLQLEIYEKCPARLTTIIMRRMMMKIAEKIAQQNGSLALITGESLGQVASQTIESLYVTNSSVSLPVFRPLIGMDKREIIDIAQKIGTYEISIRPYEDCCTIFVPKHPATKPKLEKVLEAEEKMDYQKFIDNFEEEVIEI</sequence>
<name>THII_CALS4</name>
<gene>
    <name type="primary">thiI</name>
    <name type="ordered locus">TTE1662</name>
</gene>
<dbReference type="EC" id="2.8.1.4"/>
<dbReference type="EMBL" id="AE008691">
    <property type="protein sequence ID" value="AAM24864.1"/>
    <property type="molecule type" value="Genomic_DNA"/>
</dbReference>
<dbReference type="RefSeq" id="WP_011025879.1">
    <property type="nucleotide sequence ID" value="NC_003869.1"/>
</dbReference>
<dbReference type="SMR" id="Q8R9F0"/>
<dbReference type="STRING" id="273068.TTE1662"/>
<dbReference type="KEGG" id="tte:TTE1662"/>
<dbReference type="eggNOG" id="COG0301">
    <property type="taxonomic scope" value="Bacteria"/>
</dbReference>
<dbReference type="HOGENOM" id="CLU_037952_4_0_9"/>
<dbReference type="OrthoDB" id="9773948at2"/>
<dbReference type="UniPathway" id="UPA00060"/>
<dbReference type="Proteomes" id="UP000000555">
    <property type="component" value="Chromosome"/>
</dbReference>
<dbReference type="GO" id="GO:0005829">
    <property type="term" value="C:cytosol"/>
    <property type="evidence" value="ECO:0007669"/>
    <property type="project" value="TreeGrafter"/>
</dbReference>
<dbReference type="GO" id="GO:0005524">
    <property type="term" value="F:ATP binding"/>
    <property type="evidence" value="ECO:0007669"/>
    <property type="project" value="UniProtKB-UniRule"/>
</dbReference>
<dbReference type="GO" id="GO:0004810">
    <property type="term" value="F:CCA tRNA nucleotidyltransferase activity"/>
    <property type="evidence" value="ECO:0007669"/>
    <property type="project" value="InterPro"/>
</dbReference>
<dbReference type="GO" id="GO:0000049">
    <property type="term" value="F:tRNA binding"/>
    <property type="evidence" value="ECO:0007669"/>
    <property type="project" value="UniProtKB-UniRule"/>
</dbReference>
<dbReference type="GO" id="GO:0140741">
    <property type="term" value="F:tRNA-uracil-4 sulfurtransferase activity"/>
    <property type="evidence" value="ECO:0007669"/>
    <property type="project" value="UniProtKB-EC"/>
</dbReference>
<dbReference type="GO" id="GO:0009228">
    <property type="term" value="P:thiamine biosynthetic process"/>
    <property type="evidence" value="ECO:0007669"/>
    <property type="project" value="UniProtKB-KW"/>
</dbReference>
<dbReference type="GO" id="GO:0009229">
    <property type="term" value="P:thiamine diphosphate biosynthetic process"/>
    <property type="evidence" value="ECO:0007669"/>
    <property type="project" value="UniProtKB-UniRule"/>
</dbReference>
<dbReference type="GO" id="GO:0052837">
    <property type="term" value="P:thiazole biosynthetic process"/>
    <property type="evidence" value="ECO:0007669"/>
    <property type="project" value="TreeGrafter"/>
</dbReference>
<dbReference type="GO" id="GO:0002937">
    <property type="term" value="P:tRNA 4-thiouridine biosynthesis"/>
    <property type="evidence" value="ECO:0007669"/>
    <property type="project" value="TreeGrafter"/>
</dbReference>
<dbReference type="CDD" id="cd01712">
    <property type="entry name" value="PPase_ThiI"/>
    <property type="match status" value="1"/>
</dbReference>
<dbReference type="CDD" id="cd11716">
    <property type="entry name" value="THUMP_ThiI"/>
    <property type="match status" value="1"/>
</dbReference>
<dbReference type="FunFam" id="3.40.50.620:FF:000053">
    <property type="entry name" value="Probable tRNA sulfurtransferase"/>
    <property type="match status" value="1"/>
</dbReference>
<dbReference type="Gene3D" id="3.30.2130.30">
    <property type="match status" value="1"/>
</dbReference>
<dbReference type="Gene3D" id="3.40.50.620">
    <property type="entry name" value="HUPs"/>
    <property type="match status" value="1"/>
</dbReference>
<dbReference type="HAMAP" id="MF_00021">
    <property type="entry name" value="ThiI"/>
    <property type="match status" value="1"/>
</dbReference>
<dbReference type="InterPro" id="IPR014729">
    <property type="entry name" value="Rossmann-like_a/b/a_fold"/>
</dbReference>
<dbReference type="InterPro" id="IPR020536">
    <property type="entry name" value="ThiI_AANH"/>
</dbReference>
<dbReference type="InterPro" id="IPR054173">
    <property type="entry name" value="ThiI_fer"/>
</dbReference>
<dbReference type="InterPro" id="IPR049961">
    <property type="entry name" value="ThiI_N"/>
</dbReference>
<dbReference type="InterPro" id="IPR004114">
    <property type="entry name" value="THUMP_dom"/>
</dbReference>
<dbReference type="InterPro" id="IPR049962">
    <property type="entry name" value="THUMP_ThiI"/>
</dbReference>
<dbReference type="InterPro" id="IPR003720">
    <property type="entry name" value="tRNA_STrfase"/>
</dbReference>
<dbReference type="InterPro" id="IPR050102">
    <property type="entry name" value="tRNA_sulfurtransferase_ThiI"/>
</dbReference>
<dbReference type="NCBIfam" id="TIGR00342">
    <property type="entry name" value="tRNA uracil 4-sulfurtransferase ThiI"/>
    <property type="match status" value="1"/>
</dbReference>
<dbReference type="PANTHER" id="PTHR43209">
    <property type="entry name" value="TRNA SULFURTRANSFERASE"/>
    <property type="match status" value="1"/>
</dbReference>
<dbReference type="PANTHER" id="PTHR43209:SF1">
    <property type="entry name" value="TRNA SULFURTRANSFERASE"/>
    <property type="match status" value="1"/>
</dbReference>
<dbReference type="Pfam" id="PF02568">
    <property type="entry name" value="ThiI"/>
    <property type="match status" value="1"/>
</dbReference>
<dbReference type="Pfam" id="PF22025">
    <property type="entry name" value="ThiI_fer"/>
    <property type="match status" value="1"/>
</dbReference>
<dbReference type="Pfam" id="PF02926">
    <property type="entry name" value="THUMP"/>
    <property type="match status" value="1"/>
</dbReference>
<dbReference type="SMART" id="SM00981">
    <property type="entry name" value="THUMP"/>
    <property type="match status" value="1"/>
</dbReference>
<dbReference type="SUPFAM" id="SSF52402">
    <property type="entry name" value="Adenine nucleotide alpha hydrolases-like"/>
    <property type="match status" value="1"/>
</dbReference>
<dbReference type="SUPFAM" id="SSF143437">
    <property type="entry name" value="THUMP domain-like"/>
    <property type="match status" value="1"/>
</dbReference>
<dbReference type="PROSITE" id="PS51165">
    <property type="entry name" value="THUMP"/>
    <property type="match status" value="1"/>
</dbReference>
<organism>
    <name type="scientific">Caldanaerobacter subterraneus subsp. tengcongensis (strain DSM 15242 / JCM 11007 / NBRC 100824 / MB4)</name>
    <name type="common">Thermoanaerobacter tengcongensis</name>
    <dbReference type="NCBI Taxonomy" id="273068"/>
    <lineage>
        <taxon>Bacteria</taxon>
        <taxon>Bacillati</taxon>
        <taxon>Bacillota</taxon>
        <taxon>Clostridia</taxon>
        <taxon>Thermoanaerobacterales</taxon>
        <taxon>Thermoanaerobacteraceae</taxon>
        <taxon>Caldanaerobacter</taxon>
    </lineage>
</organism>
<protein>
    <recommendedName>
        <fullName>Probable tRNA sulfurtransferase</fullName>
        <ecNumber>2.8.1.4</ecNumber>
    </recommendedName>
    <alternativeName>
        <fullName>Sulfur carrier protein ThiS sulfurtransferase</fullName>
    </alternativeName>
    <alternativeName>
        <fullName>Thiamine biosynthesis protein ThiI</fullName>
    </alternativeName>
    <alternativeName>
        <fullName>tRNA 4-thiouridine synthase</fullName>
    </alternativeName>
</protein>
<reference key="1">
    <citation type="journal article" date="2002" name="Genome Res.">
        <title>A complete sequence of the T. tengcongensis genome.</title>
        <authorList>
            <person name="Bao Q."/>
            <person name="Tian Y."/>
            <person name="Li W."/>
            <person name="Xu Z."/>
            <person name="Xuan Z."/>
            <person name="Hu S."/>
            <person name="Dong W."/>
            <person name="Yang J."/>
            <person name="Chen Y."/>
            <person name="Xue Y."/>
            <person name="Xu Y."/>
            <person name="Lai X."/>
            <person name="Huang L."/>
            <person name="Dong X."/>
            <person name="Ma Y."/>
            <person name="Ling L."/>
            <person name="Tan H."/>
            <person name="Chen R."/>
            <person name="Wang J."/>
            <person name="Yu J."/>
            <person name="Yang H."/>
        </authorList>
    </citation>
    <scope>NUCLEOTIDE SEQUENCE [LARGE SCALE GENOMIC DNA]</scope>
    <source>
        <strain>DSM 15242 / JCM 11007 / NBRC 100824 / MB4</strain>
    </source>
</reference>
<evidence type="ECO:0000250" key="1"/>
<evidence type="ECO:0000305" key="2"/>
<proteinExistence type="inferred from homology"/>
<comment type="function">
    <text evidence="1">Catalyzes the ATP-dependent transfer of a sulfur to tRNA to produce 4-thiouridine in position 8 of tRNAs, which functions as a near-UV photosensor. Also catalyzes the transfer of sulfur to the sulfur carrier protein ThiS, forming ThiS-thiocarboxylate. This is a step in the synthesis of thiazole, in the thiamine biosynthesis pathway. The sulfur is donated as persulfide by IscS (By similarity).</text>
</comment>
<comment type="catalytic activity">
    <reaction>
        <text>[ThiI sulfur-carrier protein]-S-sulfanyl-L-cysteine + a uridine in tRNA + 2 reduced [2Fe-2S]-[ferredoxin] + ATP + H(+) = [ThiI sulfur-carrier protein]-L-cysteine + a 4-thiouridine in tRNA + 2 oxidized [2Fe-2S]-[ferredoxin] + AMP + diphosphate</text>
        <dbReference type="Rhea" id="RHEA:24176"/>
        <dbReference type="Rhea" id="RHEA-COMP:10000"/>
        <dbReference type="Rhea" id="RHEA-COMP:10001"/>
        <dbReference type="Rhea" id="RHEA-COMP:13337"/>
        <dbReference type="Rhea" id="RHEA-COMP:13338"/>
        <dbReference type="Rhea" id="RHEA-COMP:13339"/>
        <dbReference type="Rhea" id="RHEA-COMP:13340"/>
        <dbReference type="ChEBI" id="CHEBI:15378"/>
        <dbReference type="ChEBI" id="CHEBI:29950"/>
        <dbReference type="ChEBI" id="CHEBI:30616"/>
        <dbReference type="ChEBI" id="CHEBI:33019"/>
        <dbReference type="ChEBI" id="CHEBI:33737"/>
        <dbReference type="ChEBI" id="CHEBI:33738"/>
        <dbReference type="ChEBI" id="CHEBI:61963"/>
        <dbReference type="ChEBI" id="CHEBI:65315"/>
        <dbReference type="ChEBI" id="CHEBI:136798"/>
        <dbReference type="ChEBI" id="CHEBI:456215"/>
        <dbReference type="EC" id="2.8.1.4"/>
    </reaction>
</comment>
<comment type="catalytic activity">
    <reaction>
        <text>[ThiS sulfur-carrier protein]-C-terminal Gly-Gly-AMP + S-sulfanyl-L-cysteinyl-[cysteine desulfurase] + AH2 = [ThiS sulfur-carrier protein]-C-terminal-Gly-aminoethanethioate + L-cysteinyl-[cysteine desulfurase] + A + AMP + 2 H(+)</text>
        <dbReference type="Rhea" id="RHEA:43340"/>
        <dbReference type="Rhea" id="RHEA-COMP:12157"/>
        <dbReference type="Rhea" id="RHEA-COMP:12158"/>
        <dbReference type="Rhea" id="RHEA-COMP:12910"/>
        <dbReference type="Rhea" id="RHEA-COMP:19908"/>
        <dbReference type="ChEBI" id="CHEBI:13193"/>
        <dbReference type="ChEBI" id="CHEBI:15378"/>
        <dbReference type="ChEBI" id="CHEBI:17499"/>
        <dbReference type="ChEBI" id="CHEBI:29950"/>
        <dbReference type="ChEBI" id="CHEBI:61963"/>
        <dbReference type="ChEBI" id="CHEBI:90618"/>
        <dbReference type="ChEBI" id="CHEBI:232372"/>
        <dbReference type="ChEBI" id="CHEBI:456215"/>
    </reaction>
</comment>
<comment type="pathway">
    <text>Cofactor biosynthesis; thiamine diphosphate biosynthesis.</text>
</comment>
<comment type="subcellular location">
    <subcellularLocation>
        <location evidence="1">Cytoplasm</location>
    </subcellularLocation>
</comment>
<comment type="similarity">
    <text evidence="2">Belongs to the ThiI family.</text>
</comment>